<keyword id="KW-0067">ATP-binding</keyword>
<keyword id="KW-0547">Nucleotide-binding</keyword>
<keyword id="KW-1185">Reference proteome</keyword>
<keyword id="KW-0813">Transport</keyword>
<sequence length="359" mass="39394">MRYSDSYHTTGRWQPRASTEGFPMGVSIEVNGLTKSFGSSRIWEDVTLTIPAGEVSVLLGPSGTGKSVFLKSLIGLLRPERGSIIIDGTDIIECSAKELYEIRTLFGVLFQDGALFGSMNLYDNTAFPLREHTKKKESEIRDIVMEKLALVGLGGDEKKFPGEISGGMRKRAGLARALVLDPQIILCDEPDSGLDPVRTAYLSQLIMDINAQIDATILIVTHNINIARTVPDNMGMLFRKHLVMFGPREVLLTSDEPVVRQFLNGRRIGPIGMSEEKDEATMAEEQALLDAGHHAGGVEEIEGVPPQISATPGMPERKAVARRQARVREMLHTLPKKAQAAILDDLEGTHKYAVHEIGQ</sequence>
<accession>P63358</accession>
<accession>A0A1R3XY49</accession>
<accession>O06784</accession>
<accession>X2BFI5</accession>
<comment type="function">
    <text>Not known, could be involved in the transport of ribonucleotides.</text>
</comment>
<comment type="similarity">
    <text evidence="2">Belongs to the ABC transporter superfamily.</text>
</comment>
<feature type="chain" id="PRO_0000092519" description="Probable ribonucleotide transport ATP-binding protein mkl">
    <location>
        <begin position="1"/>
        <end position="359"/>
    </location>
</feature>
<feature type="domain" description="ABC transporter" evidence="1">
    <location>
        <begin position="28"/>
        <end position="264"/>
    </location>
</feature>
<feature type="binding site" evidence="1">
    <location>
        <begin position="60"/>
        <end position="67"/>
    </location>
    <ligand>
        <name>ATP</name>
        <dbReference type="ChEBI" id="CHEBI:30616"/>
    </ligand>
</feature>
<evidence type="ECO:0000255" key="1">
    <source>
        <dbReference type="PROSITE-ProRule" id="PRU00434"/>
    </source>
</evidence>
<evidence type="ECO:0000305" key="2"/>
<gene>
    <name type="primary">mkl</name>
    <name type="ordered locus">BQ2027_MB0674</name>
</gene>
<name>MKL_MYCBO</name>
<organism>
    <name type="scientific">Mycobacterium bovis (strain ATCC BAA-935 / AF2122/97)</name>
    <dbReference type="NCBI Taxonomy" id="233413"/>
    <lineage>
        <taxon>Bacteria</taxon>
        <taxon>Bacillati</taxon>
        <taxon>Actinomycetota</taxon>
        <taxon>Actinomycetes</taxon>
        <taxon>Mycobacteriales</taxon>
        <taxon>Mycobacteriaceae</taxon>
        <taxon>Mycobacterium</taxon>
        <taxon>Mycobacterium tuberculosis complex</taxon>
    </lineage>
</organism>
<proteinExistence type="inferred from homology"/>
<dbReference type="EMBL" id="LT708304">
    <property type="protein sequence ID" value="SIT99272.1"/>
    <property type="molecule type" value="Genomic_DNA"/>
</dbReference>
<dbReference type="RefSeq" id="NP_854332.1">
    <property type="nucleotide sequence ID" value="NC_002945.3"/>
</dbReference>
<dbReference type="SMR" id="P63358"/>
<dbReference type="KEGG" id="mbo:BQ2027_MB0674"/>
<dbReference type="PATRIC" id="fig|233413.5.peg.734"/>
<dbReference type="Proteomes" id="UP000001419">
    <property type="component" value="Chromosome"/>
</dbReference>
<dbReference type="GO" id="GO:0005524">
    <property type="term" value="F:ATP binding"/>
    <property type="evidence" value="ECO:0007669"/>
    <property type="project" value="UniProtKB-KW"/>
</dbReference>
<dbReference type="GO" id="GO:0016887">
    <property type="term" value="F:ATP hydrolysis activity"/>
    <property type="evidence" value="ECO:0007669"/>
    <property type="project" value="InterPro"/>
</dbReference>
<dbReference type="CDD" id="cd03261">
    <property type="entry name" value="ABC_Org_Solvent_Resistant"/>
    <property type="match status" value="1"/>
</dbReference>
<dbReference type="FunFam" id="3.40.50.300:FF:000192">
    <property type="entry name" value="Phospholipid ABC transporter ATP-binding protein MlaF"/>
    <property type="match status" value="1"/>
</dbReference>
<dbReference type="Gene3D" id="3.40.50.300">
    <property type="entry name" value="P-loop containing nucleotide triphosphate hydrolases"/>
    <property type="match status" value="1"/>
</dbReference>
<dbReference type="InterPro" id="IPR003593">
    <property type="entry name" value="AAA+_ATPase"/>
</dbReference>
<dbReference type="InterPro" id="IPR003439">
    <property type="entry name" value="ABC_transporter-like_ATP-bd"/>
</dbReference>
<dbReference type="InterPro" id="IPR017871">
    <property type="entry name" value="ABC_transporter-like_CS"/>
</dbReference>
<dbReference type="InterPro" id="IPR027417">
    <property type="entry name" value="P-loop_NTPase"/>
</dbReference>
<dbReference type="PANTHER" id="PTHR43023:SF6">
    <property type="entry name" value="INTERMEMBRANE PHOSPHOLIPID TRANSPORT SYSTEM ATP-BINDING PROTEIN MLAF"/>
    <property type="match status" value="1"/>
</dbReference>
<dbReference type="PANTHER" id="PTHR43023">
    <property type="entry name" value="PROTEIN TRIGALACTOSYLDIACYLGLYCEROL 3, CHLOROPLASTIC"/>
    <property type="match status" value="1"/>
</dbReference>
<dbReference type="Pfam" id="PF00005">
    <property type="entry name" value="ABC_tran"/>
    <property type="match status" value="1"/>
</dbReference>
<dbReference type="SMART" id="SM00382">
    <property type="entry name" value="AAA"/>
    <property type="match status" value="1"/>
</dbReference>
<dbReference type="SUPFAM" id="SSF52540">
    <property type="entry name" value="P-loop containing nucleoside triphosphate hydrolases"/>
    <property type="match status" value="1"/>
</dbReference>
<dbReference type="PROSITE" id="PS00211">
    <property type="entry name" value="ABC_TRANSPORTER_1"/>
    <property type="match status" value="1"/>
</dbReference>
<dbReference type="PROSITE" id="PS50893">
    <property type="entry name" value="ABC_TRANSPORTER_2"/>
    <property type="match status" value="1"/>
</dbReference>
<reference key="1">
    <citation type="journal article" date="2003" name="Proc. Natl. Acad. Sci. U.S.A.">
        <title>The complete genome sequence of Mycobacterium bovis.</title>
        <authorList>
            <person name="Garnier T."/>
            <person name="Eiglmeier K."/>
            <person name="Camus J.-C."/>
            <person name="Medina N."/>
            <person name="Mansoor H."/>
            <person name="Pryor M."/>
            <person name="Duthoy S."/>
            <person name="Grondin S."/>
            <person name="Lacroix C."/>
            <person name="Monsempe C."/>
            <person name="Simon S."/>
            <person name="Harris B."/>
            <person name="Atkin R."/>
            <person name="Doggett J."/>
            <person name="Mayes R."/>
            <person name="Keating L."/>
            <person name="Wheeler P.R."/>
            <person name="Parkhill J."/>
            <person name="Barrell B.G."/>
            <person name="Cole S.T."/>
            <person name="Gordon S.V."/>
            <person name="Hewinson R.G."/>
        </authorList>
    </citation>
    <scope>NUCLEOTIDE SEQUENCE [LARGE SCALE GENOMIC DNA]</scope>
    <source>
        <strain>ATCC BAA-935 / AF2122/97</strain>
    </source>
</reference>
<reference key="2">
    <citation type="journal article" date="2017" name="Genome Announc.">
        <title>Updated reference genome sequence and annotation of Mycobacterium bovis AF2122/97.</title>
        <authorList>
            <person name="Malone K.M."/>
            <person name="Farrell D."/>
            <person name="Stuber T.P."/>
            <person name="Schubert O.T."/>
            <person name="Aebersold R."/>
            <person name="Robbe-Austerman S."/>
            <person name="Gordon S.V."/>
        </authorList>
    </citation>
    <scope>NUCLEOTIDE SEQUENCE [LARGE SCALE GENOMIC DNA]</scope>
    <scope>GENOME REANNOTATION</scope>
    <source>
        <strain>ATCC BAA-935 / AF2122/97</strain>
    </source>
</reference>
<protein>
    <recommendedName>
        <fullName>Probable ribonucleotide transport ATP-binding protein mkl</fullName>
    </recommendedName>
</protein>